<feature type="signal peptide" evidence="6">
    <location>
        <begin position="1"/>
        <end position="22"/>
    </location>
</feature>
<feature type="propeptide" id="PRO_0000001764" evidence="4">
    <location>
        <begin position="23"/>
        <end position="41"/>
    </location>
</feature>
<feature type="peptide" id="PRO_0000001765" description="Apelin-36" evidence="1">
    <location>
        <begin position="42"/>
        <end position="77"/>
    </location>
</feature>
<feature type="peptide" id="PRO_0000001766" description="Apelin-31" evidence="1">
    <location>
        <begin position="47"/>
        <end position="77"/>
    </location>
</feature>
<feature type="peptide" id="PRO_0000001767" description="Apelin-28" evidence="1">
    <location>
        <begin position="50"/>
        <end position="77"/>
    </location>
</feature>
<feature type="peptide" id="PRO_0000001768" description="Apelin-13" evidence="1">
    <location>
        <begin position="65"/>
        <end position="77"/>
    </location>
</feature>
<feature type="region of interest" description="Disordered" evidence="7">
    <location>
        <begin position="46"/>
        <end position="77"/>
    </location>
</feature>
<feature type="compositionally biased region" description="Basic residues" evidence="7">
    <location>
        <begin position="58"/>
        <end position="71"/>
    </location>
</feature>
<feature type="site" description="Important for the balance between G(i) and beta-arrestin pathways induced by apelin-13-APLNR system" evidence="5">
    <location>
        <position position="75"/>
    </location>
</feature>
<feature type="site" description="Important for the balance between G(i) and beta-arrestin pathways induced by apelin-13-APLNR system" evidence="5">
    <location>
        <position position="77"/>
    </location>
</feature>
<organism>
    <name type="scientific">Mus musculus</name>
    <name type="common">Mouse</name>
    <dbReference type="NCBI Taxonomy" id="10090"/>
    <lineage>
        <taxon>Eukaryota</taxon>
        <taxon>Metazoa</taxon>
        <taxon>Chordata</taxon>
        <taxon>Craniata</taxon>
        <taxon>Vertebrata</taxon>
        <taxon>Euteleostomi</taxon>
        <taxon>Mammalia</taxon>
        <taxon>Eutheria</taxon>
        <taxon>Euarchontoglires</taxon>
        <taxon>Glires</taxon>
        <taxon>Rodentia</taxon>
        <taxon>Myomorpha</taxon>
        <taxon>Muroidea</taxon>
        <taxon>Muridae</taxon>
        <taxon>Murinae</taxon>
        <taxon>Mus</taxon>
        <taxon>Mus</taxon>
    </lineage>
</organism>
<gene>
    <name evidence="15" type="primary">Apln</name>
    <name type="synonym">Apel</name>
</gene>
<name>APEL_MOUSE</name>
<reference key="1">
    <citation type="journal article" date="1999" name="Biochim. Biophys. Acta">
        <title>Apelin, the natural ligand of the orphan receptor APJ, is abundantly secreted in the colostrum.</title>
        <authorList>
            <person name="Habata Y."/>
            <person name="Fujii R."/>
            <person name="Hosoya M."/>
            <person name="Fukusumi S."/>
            <person name="Kawamata Y."/>
            <person name="Hinuma S."/>
            <person name="Kitada C."/>
            <person name="Nishizawa N."/>
            <person name="Murosaki S."/>
            <person name="Kurokawa T."/>
            <person name="Onda H."/>
            <person name="Tatemoto K."/>
            <person name="Fujino M."/>
        </authorList>
    </citation>
    <scope>NUCLEOTIDE SEQUENCE [MRNA]</scope>
    <scope>FUNCTION</scope>
    <source>
        <tissue>Brain</tissue>
    </source>
</reference>
<reference key="2">
    <citation type="journal article" date="2004" name="Genome Res.">
        <title>The status, quality, and expansion of the NIH full-length cDNA project: the Mammalian Gene Collection (MGC).</title>
        <authorList>
            <consortium name="The MGC Project Team"/>
        </authorList>
    </citation>
    <scope>NUCLEOTIDE SEQUENCE [LARGE SCALE MRNA]</scope>
    <source>
        <strain>C57BL/6J</strain>
        <tissue>Mammary gland</tissue>
    </source>
</reference>
<reference key="3">
    <citation type="journal article" date="2012" name="Nature">
        <title>APJ acts as a dual receptor in cardiac hypertrophy.</title>
        <authorList>
            <person name="Scimia M.C."/>
            <person name="Hurtado C."/>
            <person name="Ray S."/>
            <person name="Metzler S."/>
            <person name="Wei K."/>
            <person name="Wang J."/>
            <person name="Woods C.E."/>
            <person name="Purcell N.H."/>
            <person name="Catalucci D."/>
            <person name="Akasaka T."/>
            <person name="Bueno O.F."/>
            <person name="Vlasuk G.P."/>
            <person name="Kaliman P."/>
            <person name="Bodmer R."/>
            <person name="Smith L.H."/>
            <person name="Ashley E."/>
            <person name="Mercola M."/>
            <person name="Brown J.H."/>
            <person name="Ruiz-Lozano P."/>
        </authorList>
    </citation>
    <scope>FUNCTION</scope>
    <scope>DISRUPTION PHENOTYPE</scope>
</reference>
<reference key="4">
    <citation type="journal article" date="2001" name="J. Neurochem.">
        <title>Physiological role of a novel neuropeptide, apelin, and its receptor in the rat brain.</title>
        <authorList>
            <person name="Reaux A."/>
            <person name="De Mota N."/>
            <person name="Skultetyova I."/>
            <person name="Lenkei Z."/>
            <person name="El Messari S."/>
            <person name="Gallatz K."/>
            <person name="Corvol P."/>
            <person name="Palkovits M."/>
            <person name="Llorens-Cortes C."/>
        </authorList>
    </citation>
    <scope>FUNCTION</scope>
</reference>
<reference key="5">
    <citation type="journal article" date="2016" name="Basic Res. Cardiol.">
        <title>Characterization of apela, a novel endogenous ligand of apelin receptor, in the adult heart.</title>
        <authorList>
            <person name="Perjes A."/>
            <person name="Kilpioe T."/>
            <person name="Ulvila J."/>
            <person name="Magga J."/>
            <person name="Alakoski T."/>
            <person name="Szabo Z."/>
            <person name="Vainio L."/>
            <person name="Halmetoja E."/>
            <person name="Vuolteenaho O."/>
            <person name="Petaejae-Repo U."/>
            <person name="Szokodi I."/>
            <person name="Kerkelae R."/>
        </authorList>
    </citation>
    <scope>TISSUE SPECIFICITY</scope>
    <scope>ABSENCE OF INDUCTION</scope>
</reference>
<reference key="6">
    <citation type="journal article" date="2017" name="Cell Rep.">
        <title>Loss of Apela peptide in mice causes low penetrance embryonic lethality and defects in early mesodermal derivatives.</title>
        <authorList>
            <person name="Freyer L."/>
            <person name="Hsu C.W."/>
            <person name="Nowotschin S."/>
            <person name="Pauli A."/>
            <person name="Ishida J."/>
            <person name="Kuba K."/>
            <person name="Fukamizu A."/>
            <person name="Schier A.F."/>
            <person name="Hoodless P.A."/>
            <person name="Dickinson M.E."/>
            <person name="Hadjantonakis A.K."/>
        </authorList>
    </citation>
    <scope>TISSUE SPECIFICITY</scope>
    <scope>DISRUPTION PHENOTYPE</scope>
</reference>
<reference key="7">
    <citation type="journal article" date="2017" name="Dev. Cell">
        <title>Alternative progenitor cells compensate to rebuild the coronary vasculature in Elabela- and Apj-deficient hearts.</title>
        <authorList>
            <person name="Sharma B."/>
            <person name="Ho L."/>
            <person name="Ford G.H."/>
            <person name="Chen H.I."/>
            <person name="Goldstone A.B."/>
            <person name="Woo Y.J."/>
            <person name="Quertermous T."/>
            <person name="Reversade B."/>
            <person name="Red-Horse K."/>
        </authorList>
    </citation>
    <scope>FUNCTION</scope>
    <scope>DISRUPTION PHENOTYPE</scope>
</reference>
<protein>
    <recommendedName>
        <fullName>Apelin</fullName>
    </recommendedName>
    <alternativeName>
        <fullName>APJ endogenous ligand</fullName>
    </alternativeName>
    <component>
        <recommendedName>
            <fullName>Apelin-36</fullName>
        </recommendedName>
    </component>
    <component>
        <recommendedName>
            <fullName>Apelin-31</fullName>
        </recommendedName>
    </component>
    <component>
        <recommendedName>
            <fullName>Apelin-28</fullName>
        </recommendedName>
    </component>
    <component>
        <recommendedName>
            <fullName>Apelin-13</fullName>
        </recommendedName>
    </component>
</protein>
<accession>Q9R0R4</accession>
<comment type="function">
    <text evidence="2 3 8 9 10 13">Peptide hormone that functions as endogenous ligand for the G-protein-coupled apelin receptor (APLNR/APJ) (PubMed:22810587). Functions as a balanced agonist activating both G(i) protein pathway and beta-arrestin pathway of APLNR (PubMed:22810587). Downstream G proteins activation, apelin can inhibit cAMP production and activate key intracellular effectors such as ERKs (PubMed:22810587). On the other hand, APLNR activation induces beta-arrestin recruitment to the membrane leading to desensitization and internalization of the receptor (PubMed:22810587). Apelin also blunts mechanical stretch-induced hypertrophic induction from APLNR (PubMed:22810587). Apelin-36 dissociates more hardly than (pyroglu)apelin-13 from APLNR (By similarity). Involved in the regulation of cardiac precursor cell movements during gastrulation and heart morphogenesis (By similarity). Has an inhibitory effect on cytokine production in response to T-cell receptor/CD3 cross-linking; the oral intake of apelin in the colostrum and the milk might therefore modulate immune responses in neonates (PubMed:10525157). Plays a role in early coronary blood vessels formation (PubMed:28890073). Mediates myocardial contractility in an ERK1/2-dependent manner (By similarity). May also have a role in the central control of body fluid homeostasis by influencing vasopressin release and drinking behavior (PubMed:11359874).</text>
</comment>
<comment type="subcellular location">
    <subcellularLocation>
        <location evidence="4">Secreted</location>
    </subcellularLocation>
    <subcellularLocation>
        <location evidence="4">Secreted</location>
        <location evidence="4">Extracellular space</location>
    </subcellularLocation>
    <text evidence="4">Abundantly secreted in the colostrum. Lower level in milk. Decreases rapidly within several days after parturition in milk, but is still detectable even in commercial milk.</text>
</comment>
<comment type="tissue specificity">
    <text evidence="11 12">Expressed in extraembryonic visceral endoderm and in the primitive streak at 6.5 and 7.5 dpc (PubMed:28854362). Expressed in the anterior visceral yolk sac at 8.25 dpc (PubMed:28854362). Expressed weakly in the embryonic heart at 11.5 dpc (PubMed:26611206). Expressed in the adult heart (PubMed:26611206). Expressed in endothelial cells and cardiomyocytes and weakly expressed in fibroblasts (PubMed:26611206).</text>
</comment>
<comment type="induction">
    <text evidence="11">Not up-regulated following myocardial infarction (MI) (at protein level) (PubMed:26611206).</text>
</comment>
<comment type="PTM">
    <text evidence="4">Several active peptides may be produced by proteolytic processing of the peptide precursor.</text>
</comment>
<comment type="disruption phenotype">
    <text evidence="10 13">Mice heart of embryos show increased coronary vessel growth at 13.5 dpc and 15.5 dpc (PubMed:28890073). Double knockout mice of APELA and APLN genes exhibit the same penetrance, embryonic lethality and cardiovascular malformations as single APELA knockout mice (PubMed:28854362). Knockout mice do not show significant differences in their hypertrophic response compared to wild-type mice (PubMed:22810587).</text>
</comment>
<comment type="similarity">
    <text evidence="14">Belongs to the apelin family.</text>
</comment>
<sequence length="77" mass="8658">MNLRLCVQALLLLWLSLTAVCGVPLMLPPDGTGLEEGSMRYLVKPRTSRTGPGAWQGGRRKFRRQRPRLSHKGPMPF</sequence>
<keyword id="KW-0037">Angiogenesis</keyword>
<keyword id="KW-0165">Cleavage on pair of basic residues</keyword>
<keyword id="KW-0217">Developmental protein</keyword>
<keyword id="KW-0306">Gastrulation</keyword>
<keyword id="KW-0372">Hormone</keyword>
<keyword id="KW-1185">Reference proteome</keyword>
<keyword id="KW-0964">Secreted</keyword>
<keyword id="KW-0732">Signal</keyword>
<evidence type="ECO:0000250" key="1"/>
<evidence type="ECO:0000250" key="2">
    <source>
        <dbReference type="UniProtKB" id="Q4TTN8"/>
    </source>
</evidence>
<evidence type="ECO:0000250" key="3">
    <source>
        <dbReference type="UniProtKB" id="Q9R0R3"/>
    </source>
</evidence>
<evidence type="ECO:0000250" key="4">
    <source>
        <dbReference type="UniProtKB" id="Q9TUI9"/>
    </source>
</evidence>
<evidence type="ECO:0000250" key="5">
    <source>
        <dbReference type="UniProtKB" id="Q9ULZ1"/>
    </source>
</evidence>
<evidence type="ECO:0000255" key="6"/>
<evidence type="ECO:0000256" key="7">
    <source>
        <dbReference type="SAM" id="MobiDB-lite"/>
    </source>
</evidence>
<evidence type="ECO:0000269" key="8">
    <source>
    </source>
</evidence>
<evidence type="ECO:0000269" key="9">
    <source>
    </source>
</evidence>
<evidence type="ECO:0000269" key="10">
    <source>
    </source>
</evidence>
<evidence type="ECO:0000269" key="11">
    <source>
    </source>
</evidence>
<evidence type="ECO:0000269" key="12">
    <source>
    </source>
</evidence>
<evidence type="ECO:0000269" key="13">
    <source>
    </source>
</evidence>
<evidence type="ECO:0000305" key="14"/>
<evidence type="ECO:0000312" key="15">
    <source>
        <dbReference type="MGI" id="MGI:1353624"/>
    </source>
</evidence>
<proteinExistence type="evidence at protein level"/>
<dbReference type="EMBL" id="AB023494">
    <property type="protein sequence ID" value="BAA84976.1"/>
    <property type="molecule type" value="mRNA"/>
</dbReference>
<dbReference type="EMBL" id="BC020015">
    <property type="protein sequence ID" value="AAH20015.1"/>
    <property type="molecule type" value="mRNA"/>
</dbReference>
<dbReference type="CCDS" id="CCDS40958.1"/>
<dbReference type="RefSeq" id="NP_038940.1">
    <property type="nucleotide sequence ID" value="NM_013912.4"/>
</dbReference>
<dbReference type="BMRB" id="Q9R0R4"/>
<dbReference type="FunCoup" id="Q9R0R4">
    <property type="interactions" value="594"/>
</dbReference>
<dbReference type="STRING" id="10090.ENSMUSP00000046012"/>
<dbReference type="PaxDb" id="10090-ENSMUSP00000046012"/>
<dbReference type="Antibodypedia" id="30097">
    <property type="antibodies" value="302 antibodies from 28 providers"/>
</dbReference>
<dbReference type="DNASU" id="30878"/>
<dbReference type="Ensembl" id="ENSMUST00000039026.8">
    <property type="protein sequence ID" value="ENSMUSP00000046012.8"/>
    <property type="gene ID" value="ENSMUSG00000037010.8"/>
</dbReference>
<dbReference type="GeneID" id="30878"/>
<dbReference type="KEGG" id="mmu:30878"/>
<dbReference type="UCSC" id="uc009tbu.1">
    <property type="organism name" value="mouse"/>
</dbReference>
<dbReference type="AGR" id="MGI:1353624"/>
<dbReference type="CTD" id="8862"/>
<dbReference type="MGI" id="MGI:1353624">
    <property type="gene designation" value="Apln"/>
</dbReference>
<dbReference type="VEuPathDB" id="HostDB:ENSMUSG00000037010"/>
<dbReference type="eggNOG" id="ENOG502S9TY">
    <property type="taxonomic scope" value="Eukaryota"/>
</dbReference>
<dbReference type="GeneTree" id="ENSGT00390000014020"/>
<dbReference type="HOGENOM" id="CLU_198461_0_0_1"/>
<dbReference type="InParanoid" id="Q9R0R4"/>
<dbReference type="OMA" id="GHRQNGW"/>
<dbReference type="OrthoDB" id="9892041at2759"/>
<dbReference type="PhylomeDB" id="Q9R0R4"/>
<dbReference type="TreeFam" id="TF339660"/>
<dbReference type="Reactome" id="R-MMU-375276">
    <property type="pathway name" value="Peptide ligand-binding receptors"/>
</dbReference>
<dbReference type="Reactome" id="R-MMU-418594">
    <property type="pathway name" value="G alpha (i) signalling events"/>
</dbReference>
<dbReference type="BioGRID-ORCS" id="30878">
    <property type="hits" value="3 hits in 79 CRISPR screens"/>
</dbReference>
<dbReference type="PRO" id="PR:Q9R0R4"/>
<dbReference type="Proteomes" id="UP000000589">
    <property type="component" value="Chromosome X"/>
</dbReference>
<dbReference type="RNAct" id="Q9R0R4">
    <property type="molecule type" value="protein"/>
</dbReference>
<dbReference type="Bgee" id="ENSMUSG00000037010">
    <property type="expression patterns" value="Expressed in lumbar subsegment of spinal cord and 199 other cell types or tissues"/>
</dbReference>
<dbReference type="ExpressionAtlas" id="Q9R0R4">
    <property type="expression patterns" value="baseline and differential"/>
</dbReference>
<dbReference type="GO" id="GO:0005576">
    <property type="term" value="C:extracellular region"/>
    <property type="evidence" value="ECO:0000250"/>
    <property type="project" value="UniProtKB"/>
</dbReference>
<dbReference type="GO" id="GO:0005615">
    <property type="term" value="C:extracellular space"/>
    <property type="evidence" value="ECO:0000250"/>
    <property type="project" value="UniProtKB"/>
</dbReference>
<dbReference type="GO" id="GO:0048471">
    <property type="term" value="C:perinuclear region of cytoplasm"/>
    <property type="evidence" value="ECO:0007669"/>
    <property type="project" value="Ensembl"/>
</dbReference>
<dbReference type="GO" id="GO:0031704">
    <property type="term" value="F:apelin receptor binding"/>
    <property type="evidence" value="ECO:0000250"/>
    <property type="project" value="UniProtKB"/>
</dbReference>
<dbReference type="GO" id="GO:0005179">
    <property type="term" value="F:hormone activity"/>
    <property type="evidence" value="ECO:0000250"/>
    <property type="project" value="UniProtKB"/>
</dbReference>
<dbReference type="GO" id="GO:0042802">
    <property type="term" value="F:identical protein binding"/>
    <property type="evidence" value="ECO:0007669"/>
    <property type="project" value="Ensembl"/>
</dbReference>
<dbReference type="GO" id="GO:0005102">
    <property type="term" value="F:signaling receptor binding"/>
    <property type="evidence" value="ECO:0000266"/>
    <property type="project" value="MGI"/>
</dbReference>
<dbReference type="GO" id="GO:0001525">
    <property type="term" value="P:angiogenesis"/>
    <property type="evidence" value="ECO:0007669"/>
    <property type="project" value="UniProtKB-KW"/>
</dbReference>
<dbReference type="GO" id="GO:0060183">
    <property type="term" value="P:apelin receptor signaling pathway"/>
    <property type="evidence" value="ECO:0000314"/>
    <property type="project" value="UniProtKB"/>
</dbReference>
<dbReference type="GO" id="GO:0060976">
    <property type="term" value="P:coronary vasculature development"/>
    <property type="evidence" value="ECO:0000315"/>
    <property type="project" value="UniProtKB"/>
</dbReference>
<dbReference type="GO" id="GO:0042756">
    <property type="term" value="P:drinking behavior"/>
    <property type="evidence" value="ECO:0000250"/>
    <property type="project" value="UniProtKB"/>
</dbReference>
<dbReference type="GO" id="GO:0007186">
    <property type="term" value="P:G protein-coupled receptor signaling pathway"/>
    <property type="evidence" value="ECO:0000266"/>
    <property type="project" value="MGI"/>
</dbReference>
<dbReference type="GO" id="GO:0007369">
    <property type="term" value="P:gastrulation"/>
    <property type="evidence" value="ECO:0007669"/>
    <property type="project" value="UniProtKB-KW"/>
</dbReference>
<dbReference type="GO" id="GO:0045776">
    <property type="term" value="P:negative regulation of blood pressure"/>
    <property type="evidence" value="ECO:0000250"/>
    <property type="project" value="UniProtKB"/>
</dbReference>
<dbReference type="GO" id="GO:0040037">
    <property type="term" value="P:negative regulation of fibroblast growth factor receptor signaling pathway"/>
    <property type="evidence" value="ECO:0007669"/>
    <property type="project" value="Ensembl"/>
</dbReference>
<dbReference type="GO" id="GO:0010629">
    <property type="term" value="P:negative regulation of gene expression"/>
    <property type="evidence" value="ECO:0007669"/>
    <property type="project" value="Ensembl"/>
</dbReference>
<dbReference type="GO" id="GO:0003085">
    <property type="term" value="P:negative regulation of systemic arterial blood pressure"/>
    <property type="evidence" value="ECO:0007669"/>
    <property type="project" value="Ensembl"/>
</dbReference>
<dbReference type="GO" id="GO:1904706">
    <property type="term" value="P:negative regulation of vascular associated smooth muscle cell proliferation"/>
    <property type="evidence" value="ECO:0007669"/>
    <property type="project" value="Ensembl"/>
</dbReference>
<dbReference type="GO" id="GO:0045906">
    <property type="term" value="P:negative regulation of vasoconstriction"/>
    <property type="evidence" value="ECO:0007669"/>
    <property type="project" value="Ensembl"/>
</dbReference>
<dbReference type="GO" id="GO:0051461">
    <property type="term" value="P:positive regulation of corticotropin secretion"/>
    <property type="evidence" value="ECO:0007669"/>
    <property type="project" value="Ensembl"/>
</dbReference>
<dbReference type="GO" id="GO:0051466">
    <property type="term" value="P:positive regulation of corticotropin-releasing hormone secretion"/>
    <property type="evidence" value="ECO:0007669"/>
    <property type="project" value="Ensembl"/>
</dbReference>
<dbReference type="GO" id="GO:1904022">
    <property type="term" value="P:positive regulation of G protein-coupled receptor internalization"/>
    <property type="evidence" value="ECO:0000314"/>
    <property type="project" value="UniProtKB"/>
</dbReference>
<dbReference type="GO" id="GO:0045823">
    <property type="term" value="P:positive regulation of heart contraction"/>
    <property type="evidence" value="ECO:0000250"/>
    <property type="project" value="UniProtKB"/>
</dbReference>
<dbReference type="GO" id="GO:0010460">
    <property type="term" value="P:positive regulation of heart rate"/>
    <property type="evidence" value="ECO:0007669"/>
    <property type="project" value="Ensembl"/>
</dbReference>
<dbReference type="GO" id="GO:0031652">
    <property type="term" value="P:positive regulation of heat generation"/>
    <property type="evidence" value="ECO:0007669"/>
    <property type="project" value="Ensembl"/>
</dbReference>
<dbReference type="GO" id="GO:1902895">
    <property type="term" value="P:positive regulation of miRNA transcription"/>
    <property type="evidence" value="ECO:0007669"/>
    <property type="project" value="Ensembl"/>
</dbReference>
<dbReference type="GO" id="GO:0042327">
    <property type="term" value="P:positive regulation of phosphorylation"/>
    <property type="evidence" value="ECO:0007669"/>
    <property type="project" value="Ensembl"/>
</dbReference>
<dbReference type="GO" id="GO:1905564">
    <property type="term" value="P:positive regulation of vascular endothelial cell proliferation"/>
    <property type="evidence" value="ECO:0007669"/>
    <property type="project" value="Ensembl"/>
</dbReference>
<dbReference type="GO" id="GO:0050878">
    <property type="term" value="P:regulation of body fluid levels"/>
    <property type="evidence" value="ECO:0007669"/>
    <property type="project" value="Ensembl"/>
</dbReference>
<dbReference type="GO" id="GO:0002026">
    <property type="term" value="P:regulation of the force of heart contraction"/>
    <property type="evidence" value="ECO:0007669"/>
    <property type="project" value="Ensembl"/>
</dbReference>
<dbReference type="InterPro" id="IPR026155">
    <property type="entry name" value="Apelin"/>
</dbReference>
<dbReference type="PANTHER" id="PTHR15953">
    <property type="entry name" value="APELIN"/>
    <property type="match status" value="1"/>
</dbReference>
<dbReference type="PANTHER" id="PTHR15953:SF0">
    <property type="entry name" value="APELIN"/>
    <property type="match status" value="1"/>
</dbReference>
<dbReference type="Pfam" id="PF15360">
    <property type="entry name" value="Apelin"/>
    <property type="match status" value="1"/>
</dbReference>